<sequence>MGLFTVTKKATTPFEGQKPGTSGLRKKVTVFQQPHYLQNFVQSTFNALPADQVKGATIVVSGDGRYFSKDAVQIITKMAAANGVRRVWVGQNSLMSTPAVSAVIRERIGADGSKATGAFILTASHNPGGPTEDFGIKYNMGNGGPAPESVTDKIFSNTTTISEYLISEDLPDVDISVVGVTSFSGPEGPFDVDVFDSSVNYIKLMKTIFDFEAIKKLLTSPKFTFCYDALHGVAGAYAKHIFVEELGADESSLLNCVPKEDFGGGHPDPNLTYAKELVERMGLGKSSSNVEPPEFGAAADGDADRNMILGKRFFVTPSDSVAIIAANAVQSIPYFASGLKGVARSMPTSAALDVVAKNLNLKFFEVPTGWKFFGNLMDAGMCSICGEESFGTGSDHIREKDGIWAVLAWLSIIAFKNKDNLGGDKLVTVEDIVRQHWATYGRHYYTRYDYENVDAGAAKELMANLVSMQSSLSDVNKLIKEIRSDVSEVVAADEFEYKDPVDGSVSKHQGIRYLFGDGSRLVFRLSGTGSVGATIRVYIEQYEKDSSKTGRDSQEALAPLVDVALKLSKMQEYTGRSAPTVIT</sequence>
<organism>
    <name type="scientific">Zea mays</name>
    <name type="common">Maize</name>
    <dbReference type="NCBI Taxonomy" id="4577"/>
    <lineage>
        <taxon>Eukaryota</taxon>
        <taxon>Viridiplantae</taxon>
        <taxon>Streptophyta</taxon>
        <taxon>Embryophyta</taxon>
        <taxon>Tracheophyta</taxon>
        <taxon>Spermatophyta</taxon>
        <taxon>Magnoliopsida</taxon>
        <taxon>Liliopsida</taxon>
        <taxon>Poales</taxon>
        <taxon>Poaceae</taxon>
        <taxon>PACMAD clade</taxon>
        <taxon>Panicoideae</taxon>
        <taxon>Andropogonodae</taxon>
        <taxon>Andropogoneae</taxon>
        <taxon>Tripsacinae</taxon>
        <taxon>Zea</taxon>
    </lineage>
</organism>
<accession>P93805</accession>
<protein>
    <recommendedName>
        <fullName>Phosphoglucomutase, cytoplasmic 2</fullName>
        <shortName>PGM 2</shortName>
        <ecNumber evidence="3">5.4.2.2</ecNumber>
    </recommendedName>
    <alternativeName>
        <fullName>Glucose phosphomutase 2</fullName>
    </alternativeName>
</protein>
<dbReference type="EC" id="5.4.2.2" evidence="3"/>
<dbReference type="EMBL" id="U89342">
    <property type="protein sequence ID" value="AAC50049.1"/>
    <property type="molecule type" value="mRNA"/>
</dbReference>
<dbReference type="PIR" id="T04327">
    <property type="entry name" value="T04327"/>
</dbReference>
<dbReference type="RefSeq" id="NP_001105405.1">
    <property type="nucleotide sequence ID" value="NM_001111935.1"/>
</dbReference>
<dbReference type="SMR" id="P93805"/>
<dbReference type="FunCoup" id="P93805">
    <property type="interactions" value="3394"/>
</dbReference>
<dbReference type="STRING" id="4577.P93805"/>
<dbReference type="iPTMnet" id="P93805"/>
<dbReference type="PaxDb" id="4577-GRMZM2G023289_P01"/>
<dbReference type="GeneID" id="542358"/>
<dbReference type="KEGG" id="zma:542358"/>
<dbReference type="MaizeGDB" id="12544"/>
<dbReference type="eggNOG" id="KOG0625">
    <property type="taxonomic scope" value="Eukaryota"/>
</dbReference>
<dbReference type="InParanoid" id="P93805"/>
<dbReference type="OrthoDB" id="2291at2759"/>
<dbReference type="BRENDA" id="5.4.2.2">
    <property type="organism ID" value="6752"/>
</dbReference>
<dbReference type="Proteomes" id="UP000007305">
    <property type="component" value="Unplaced"/>
</dbReference>
<dbReference type="ExpressionAtlas" id="P93805">
    <property type="expression patterns" value="baseline and differential"/>
</dbReference>
<dbReference type="GO" id="GO:0005829">
    <property type="term" value="C:cytosol"/>
    <property type="evidence" value="ECO:0000318"/>
    <property type="project" value="GO_Central"/>
</dbReference>
<dbReference type="GO" id="GO:0000287">
    <property type="term" value="F:magnesium ion binding"/>
    <property type="evidence" value="ECO:0007669"/>
    <property type="project" value="InterPro"/>
</dbReference>
<dbReference type="GO" id="GO:0004614">
    <property type="term" value="F:phosphoglucomutase activity"/>
    <property type="evidence" value="ECO:0000318"/>
    <property type="project" value="GO_Central"/>
</dbReference>
<dbReference type="GO" id="GO:0005975">
    <property type="term" value="P:carbohydrate metabolic process"/>
    <property type="evidence" value="ECO:0000318"/>
    <property type="project" value="GO_Central"/>
</dbReference>
<dbReference type="GO" id="GO:0006006">
    <property type="term" value="P:glucose metabolic process"/>
    <property type="evidence" value="ECO:0007669"/>
    <property type="project" value="UniProtKB-KW"/>
</dbReference>
<dbReference type="CDD" id="cd03085">
    <property type="entry name" value="PGM1"/>
    <property type="match status" value="1"/>
</dbReference>
<dbReference type="FunFam" id="3.30.310.50:FF:000002">
    <property type="entry name" value="Phosphoglucomutase 5"/>
    <property type="match status" value="1"/>
</dbReference>
<dbReference type="FunFam" id="3.40.120.10:FF:000004">
    <property type="entry name" value="Phosphoglucomutase 5"/>
    <property type="match status" value="1"/>
</dbReference>
<dbReference type="FunFam" id="3.40.120.10:FF:000005">
    <property type="entry name" value="Phosphoglucomutase 5"/>
    <property type="match status" value="1"/>
</dbReference>
<dbReference type="FunFam" id="3.40.120.10:FF:000009">
    <property type="entry name" value="Phosphoglucomutase, cytoplasmic 1"/>
    <property type="match status" value="1"/>
</dbReference>
<dbReference type="Gene3D" id="3.40.120.10">
    <property type="entry name" value="Alpha-D-Glucose-1,6-Bisphosphate, subunit A, domain 3"/>
    <property type="match status" value="3"/>
</dbReference>
<dbReference type="Gene3D" id="3.30.310.50">
    <property type="entry name" value="Alpha-D-phosphohexomutase, C-terminal domain"/>
    <property type="match status" value="1"/>
</dbReference>
<dbReference type="InterPro" id="IPR005844">
    <property type="entry name" value="A-D-PHexomutase_a/b/a-I"/>
</dbReference>
<dbReference type="InterPro" id="IPR016055">
    <property type="entry name" value="A-D-PHexomutase_a/b/a-I/II/III"/>
</dbReference>
<dbReference type="InterPro" id="IPR005845">
    <property type="entry name" value="A-D-PHexomutase_a/b/a-II"/>
</dbReference>
<dbReference type="InterPro" id="IPR005846">
    <property type="entry name" value="A-D-PHexomutase_a/b/a-III"/>
</dbReference>
<dbReference type="InterPro" id="IPR036900">
    <property type="entry name" value="A-D-PHexomutase_C_sf"/>
</dbReference>
<dbReference type="InterPro" id="IPR016066">
    <property type="entry name" value="A-D-PHexomutase_CS"/>
</dbReference>
<dbReference type="InterPro" id="IPR005841">
    <property type="entry name" value="Alpha-D-phosphohexomutase_SF"/>
</dbReference>
<dbReference type="InterPro" id="IPR045244">
    <property type="entry name" value="PGM"/>
</dbReference>
<dbReference type="NCBIfam" id="NF005737">
    <property type="entry name" value="PRK07564.1-1"/>
    <property type="match status" value="1"/>
</dbReference>
<dbReference type="PANTHER" id="PTHR22573:SF2">
    <property type="entry name" value="PHOSPHOGLUCOMUTASE"/>
    <property type="match status" value="1"/>
</dbReference>
<dbReference type="PANTHER" id="PTHR22573">
    <property type="entry name" value="PHOSPHOHEXOMUTASE FAMILY MEMBER"/>
    <property type="match status" value="1"/>
</dbReference>
<dbReference type="Pfam" id="PF24947">
    <property type="entry name" value="PGM1_C_vert_fung"/>
    <property type="match status" value="1"/>
</dbReference>
<dbReference type="Pfam" id="PF02878">
    <property type="entry name" value="PGM_PMM_I"/>
    <property type="match status" value="1"/>
</dbReference>
<dbReference type="Pfam" id="PF02879">
    <property type="entry name" value="PGM_PMM_II"/>
    <property type="match status" value="1"/>
</dbReference>
<dbReference type="Pfam" id="PF02880">
    <property type="entry name" value="PGM_PMM_III"/>
    <property type="match status" value="1"/>
</dbReference>
<dbReference type="PRINTS" id="PR00509">
    <property type="entry name" value="PGMPMM"/>
</dbReference>
<dbReference type="SUPFAM" id="SSF55957">
    <property type="entry name" value="Phosphoglucomutase, C-terminal domain"/>
    <property type="match status" value="1"/>
</dbReference>
<dbReference type="SUPFAM" id="SSF53738">
    <property type="entry name" value="Phosphoglucomutase, first 3 domains"/>
    <property type="match status" value="3"/>
</dbReference>
<dbReference type="PROSITE" id="PS00710">
    <property type="entry name" value="PGM_PMM"/>
    <property type="match status" value="1"/>
</dbReference>
<comment type="function">
    <text evidence="2 3">Catalyzes the reversible isomerization of alpha-D-glucose 1-phosphate to alpha-D-glucose 6-phosphate (By similarity). The mechanism proceeds via the intermediate compound alpha-D-glucose 1,6-bisphosphate (By similarity). This enzyme participates in both the breakdown and synthesis of glucose (By similarity).</text>
</comment>
<comment type="catalytic activity">
    <reaction evidence="3">
        <text>alpha-D-glucose 1-phosphate = alpha-D-glucose 6-phosphate</text>
        <dbReference type="Rhea" id="RHEA:23536"/>
        <dbReference type="ChEBI" id="CHEBI:58225"/>
        <dbReference type="ChEBI" id="CHEBI:58601"/>
        <dbReference type="EC" id="5.4.2.2"/>
    </reaction>
</comment>
<comment type="catalytic activity">
    <reaction evidence="3">
        <text>O-phospho-L-seryl-[protein] + alpha-D-glucose 1-phosphate = alpha-D-glucose 1,6-bisphosphate + L-seryl-[protein]</text>
        <dbReference type="Rhea" id="RHEA:68748"/>
        <dbReference type="Rhea" id="RHEA-COMP:9863"/>
        <dbReference type="Rhea" id="RHEA-COMP:11604"/>
        <dbReference type="ChEBI" id="CHEBI:29999"/>
        <dbReference type="ChEBI" id="CHEBI:58392"/>
        <dbReference type="ChEBI" id="CHEBI:58601"/>
        <dbReference type="ChEBI" id="CHEBI:83421"/>
    </reaction>
</comment>
<comment type="catalytic activity">
    <reaction evidence="3">
        <text>alpha-D-glucose 1,6-bisphosphate + L-seryl-[protein] = O-phospho-L-seryl-[protein] + alpha-D-glucose 6-phosphate</text>
        <dbReference type="Rhea" id="RHEA:68752"/>
        <dbReference type="Rhea" id="RHEA-COMP:9863"/>
        <dbReference type="Rhea" id="RHEA-COMP:11604"/>
        <dbReference type="ChEBI" id="CHEBI:29999"/>
        <dbReference type="ChEBI" id="CHEBI:58225"/>
        <dbReference type="ChEBI" id="CHEBI:58392"/>
        <dbReference type="ChEBI" id="CHEBI:83421"/>
    </reaction>
</comment>
<comment type="cofactor">
    <cofactor evidence="1">
        <name>Mg(2+)</name>
        <dbReference type="ChEBI" id="CHEBI:18420"/>
    </cofactor>
    <text evidence="1">Binds 1 Mg(2+) ion per subunit.</text>
</comment>
<comment type="subunit">
    <text evidence="1">Monomer.</text>
</comment>
<comment type="subcellular location">
    <subcellularLocation>
        <location evidence="3">Cytoplasm</location>
    </subcellularLocation>
</comment>
<comment type="similarity">
    <text evidence="4">Belongs to the phosphohexose mutase family.</text>
</comment>
<name>PGMC2_MAIZE</name>
<feature type="chain" id="PRO_0000147802" description="Phosphoglucomutase, cytoplasmic 2">
    <location>
        <begin position="1"/>
        <end position="583"/>
    </location>
</feature>
<feature type="active site" description="Phosphoserine intermediate" evidence="1">
    <location>
        <position position="124"/>
    </location>
</feature>
<feature type="binding site" evidence="1">
    <location>
        <position position="25"/>
    </location>
    <ligand>
        <name>alpha-D-glucose 1,6-bisphosphate</name>
        <dbReference type="ChEBI" id="CHEBI:58392"/>
    </ligand>
</feature>
<feature type="binding site" evidence="1">
    <location>
        <position position="124"/>
    </location>
    <ligand>
        <name>alpha-D-glucose 1,6-bisphosphate</name>
        <dbReference type="ChEBI" id="CHEBI:58392"/>
    </ligand>
</feature>
<feature type="binding site" description="via phosphate group" evidence="1">
    <location>
        <position position="124"/>
    </location>
    <ligand>
        <name>Mg(2+)</name>
        <dbReference type="ChEBI" id="CHEBI:18420"/>
    </ligand>
</feature>
<feature type="binding site" evidence="1">
    <location>
        <position position="300"/>
    </location>
    <ligand>
        <name>Mg(2+)</name>
        <dbReference type="ChEBI" id="CHEBI:18420"/>
    </ligand>
</feature>
<feature type="binding site" evidence="1">
    <location>
        <position position="302"/>
    </location>
    <ligand>
        <name>Mg(2+)</name>
        <dbReference type="ChEBI" id="CHEBI:18420"/>
    </ligand>
</feature>
<feature type="binding site" evidence="1">
    <location>
        <position position="304"/>
    </location>
    <ligand>
        <name>alpha-D-glucose 1,6-bisphosphate</name>
        <dbReference type="ChEBI" id="CHEBI:58392"/>
    </ligand>
</feature>
<feature type="binding site" evidence="1">
    <location>
        <position position="304"/>
    </location>
    <ligand>
        <name>Mg(2+)</name>
        <dbReference type="ChEBI" id="CHEBI:18420"/>
    </ligand>
</feature>
<feature type="binding site" evidence="1">
    <location>
        <position position="305"/>
    </location>
    <ligand>
        <name>alpha-D-glucose 1,6-bisphosphate</name>
        <dbReference type="ChEBI" id="CHEBI:58392"/>
    </ligand>
</feature>
<feature type="binding site" evidence="1">
    <location>
        <position position="368"/>
    </location>
    <ligand>
        <name>alpha-D-glucose 1,6-bisphosphate</name>
        <dbReference type="ChEBI" id="CHEBI:58392"/>
    </ligand>
</feature>
<feature type="binding site" evidence="1">
    <location>
        <position position="387"/>
    </location>
    <ligand>
        <name>alpha-D-glucose 1,6-bisphosphate</name>
        <dbReference type="ChEBI" id="CHEBI:58392"/>
    </ligand>
</feature>
<feature type="binding site" evidence="1">
    <location>
        <position position="389"/>
    </location>
    <ligand>
        <name>alpha-D-glucose 1,6-bisphosphate</name>
        <dbReference type="ChEBI" id="CHEBI:58392"/>
    </ligand>
</feature>
<feature type="binding site" evidence="1">
    <location>
        <position position="400"/>
    </location>
    <ligand>
        <name>alpha-D-glucose 1,6-bisphosphate</name>
        <dbReference type="ChEBI" id="CHEBI:58392"/>
    </ligand>
</feature>
<feature type="modified residue" description="Phosphoserine" evidence="1">
    <location>
        <position position="124"/>
    </location>
</feature>
<keyword id="KW-0119">Carbohydrate metabolism</keyword>
<keyword id="KW-0963">Cytoplasm</keyword>
<keyword id="KW-0313">Glucose metabolism</keyword>
<keyword id="KW-0413">Isomerase</keyword>
<keyword id="KW-0460">Magnesium</keyword>
<keyword id="KW-0479">Metal-binding</keyword>
<keyword id="KW-0597">Phosphoprotein</keyword>
<keyword id="KW-1185">Reference proteome</keyword>
<evidence type="ECO:0000250" key="1">
    <source>
        <dbReference type="UniProtKB" id="P00949"/>
    </source>
</evidence>
<evidence type="ECO:0000250" key="2">
    <source>
        <dbReference type="UniProtKB" id="P36871"/>
    </source>
</evidence>
<evidence type="ECO:0000250" key="3">
    <source>
        <dbReference type="UniProtKB" id="P93804"/>
    </source>
</evidence>
<evidence type="ECO:0000305" key="4"/>
<proteinExistence type="evidence at transcript level"/>
<reference key="1">
    <citation type="journal article" date="1998" name="Plant Physiol.">
        <title>Molecular and biochemical characterization of cytosolic phosphoglucomutase in maize: expression during development and in response to oxygen deprivation.</title>
        <authorList>
            <person name="Manjunath S."/>
            <person name="Lee C.-H.K."/>
            <person name="VanWinkle P."/>
            <person name="Bailey-Serres J."/>
        </authorList>
    </citation>
    <scope>NUCLEOTIDE SEQUENCE [MRNA]</scope>
    <source>
        <strain>cv. B73</strain>
    </source>
</reference>